<comment type="function">
    <text>Inhibition of trypsin.</text>
</comment>
<comment type="similarity">
    <text evidence="2">Belongs to the protease inhibitor I3 (leguminous Kunitz-type inhibitor) family.</text>
</comment>
<proteinExistence type="evidence at protein level"/>
<keyword id="KW-0903">Direct protein sequencing</keyword>
<keyword id="KW-1015">Disulfide bond</keyword>
<keyword id="KW-0646">Protease inhibitor</keyword>
<keyword id="KW-0722">Serine protease inhibitor</keyword>
<protein>
    <recommendedName>
        <fullName>Trypsin inhibitor DE-3</fullName>
    </recommendedName>
    <alternativeName>
        <fullName>ETIA</fullName>
    </alternativeName>
</protein>
<dbReference type="PIR" id="JH0780">
    <property type="entry name" value="JH0780"/>
</dbReference>
<dbReference type="SMR" id="P81366"/>
<dbReference type="MEROPS" id="I03.011"/>
<dbReference type="GO" id="GO:0004867">
    <property type="term" value="F:serine-type endopeptidase inhibitor activity"/>
    <property type="evidence" value="ECO:0007669"/>
    <property type="project" value="UniProtKB-KW"/>
</dbReference>
<dbReference type="CDD" id="cd23362">
    <property type="entry name" value="beta-trefoil_STI_WCI3-like"/>
    <property type="match status" value="1"/>
</dbReference>
<dbReference type="Gene3D" id="2.80.10.50">
    <property type="match status" value="1"/>
</dbReference>
<dbReference type="InterPro" id="IPR011065">
    <property type="entry name" value="Kunitz_inhibitor_STI-like_sf"/>
</dbReference>
<dbReference type="InterPro" id="IPR002160">
    <property type="entry name" value="Prot_inh_Kunz-lg"/>
</dbReference>
<dbReference type="PANTHER" id="PTHR33107">
    <property type="entry name" value="KUNITZ TRYPSIN INHIBITOR 2"/>
    <property type="match status" value="1"/>
</dbReference>
<dbReference type="PANTHER" id="PTHR33107:SF81">
    <property type="entry name" value="TRYPSIN INHIBITOR A"/>
    <property type="match status" value="1"/>
</dbReference>
<dbReference type="Pfam" id="PF00197">
    <property type="entry name" value="Kunitz_legume"/>
    <property type="match status" value="1"/>
</dbReference>
<dbReference type="PRINTS" id="PR00291">
    <property type="entry name" value="KUNITZINHBTR"/>
</dbReference>
<dbReference type="SMART" id="SM00452">
    <property type="entry name" value="STI"/>
    <property type="match status" value="1"/>
</dbReference>
<dbReference type="SUPFAM" id="SSF50386">
    <property type="entry name" value="STI-like"/>
    <property type="match status" value="1"/>
</dbReference>
<dbReference type="PROSITE" id="PS00283">
    <property type="entry name" value="SOYBEAN_KUNITZ"/>
    <property type="match status" value="1"/>
</dbReference>
<name>IDE3_ERYVA</name>
<reference key="1">
    <citation type="journal article" date="1992" name="Biosci. Biotechnol. Biochem.">
        <title>Isolation and primary structure of proteinase inhibitors from Erythrina variegata (Linn.) var. Orientalis seeds.</title>
        <authorList>
            <person name="Kouzuma Y."/>
            <person name="Suetake M."/>
            <person name="Kimura M."/>
            <person name="Yamasaki N."/>
        </authorList>
    </citation>
    <scope>PROTEIN SEQUENCE</scope>
    <source>
        <strain>Var. Orientalis</strain>
        <tissue>Seed</tissue>
    </source>
</reference>
<feature type="chain" id="PRO_0000083289" description="Trypsin inhibitor DE-3">
    <location>
        <begin position="1"/>
        <end position="172"/>
    </location>
</feature>
<feature type="site" description="Reactive bond for trypsin">
    <location>
        <begin position="63"/>
        <end position="64"/>
    </location>
</feature>
<feature type="disulfide bond" evidence="1">
    <location>
        <begin position="39"/>
        <end position="83"/>
    </location>
</feature>
<feature type="disulfide bond" evidence="1">
    <location>
        <begin position="132"/>
        <end position="139"/>
    </location>
</feature>
<sequence>VLLDGNGEVVQNGGTYYLLPQVWAQGGGVQLAKTGEETCPLTVVQSPNELSNGKPIRIESRLRSAFIPDDDKVRIGFAYAPKCAPSPWWTVLEDEQEGLSVKLSEDESTQFDYPFKFEQVSDKLHSYKLLYCEGKHEKCASIGINRDQKGYRRLVVTEDNPLTVVLKKDESS</sequence>
<accession>P81366</accession>
<evidence type="ECO:0000250" key="1"/>
<evidence type="ECO:0000305" key="2"/>
<organism>
    <name type="scientific">Erythrina variegata</name>
    <name type="common">Indian coral tree</name>
    <name type="synonym">Erythrina indica</name>
    <dbReference type="NCBI Taxonomy" id="3845"/>
    <lineage>
        <taxon>Eukaryota</taxon>
        <taxon>Viridiplantae</taxon>
        <taxon>Streptophyta</taxon>
        <taxon>Embryophyta</taxon>
        <taxon>Tracheophyta</taxon>
        <taxon>Spermatophyta</taxon>
        <taxon>Magnoliopsida</taxon>
        <taxon>eudicotyledons</taxon>
        <taxon>Gunneridae</taxon>
        <taxon>Pentapetalae</taxon>
        <taxon>rosids</taxon>
        <taxon>fabids</taxon>
        <taxon>Fabales</taxon>
        <taxon>Fabaceae</taxon>
        <taxon>Papilionoideae</taxon>
        <taxon>50 kb inversion clade</taxon>
        <taxon>NPAAA clade</taxon>
        <taxon>indigoferoid/millettioid clade</taxon>
        <taxon>Phaseoleae</taxon>
        <taxon>Erythrina</taxon>
    </lineage>
</organism>